<gene>
    <name evidence="1" type="primary">asnA</name>
    <name type="ordered locus">SeHA_C4210</name>
</gene>
<organism>
    <name type="scientific">Salmonella heidelberg (strain SL476)</name>
    <dbReference type="NCBI Taxonomy" id="454169"/>
    <lineage>
        <taxon>Bacteria</taxon>
        <taxon>Pseudomonadati</taxon>
        <taxon>Pseudomonadota</taxon>
        <taxon>Gammaproteobacteria</taxon>
        <taxon>Enterobacterales</taxon>
        <taxon>Enterobacteriaceae</taxon>
        <taxon>Salmonella</taxon>
    </lineage>
</organism>
<comment type="catalytic activity">
    <reaction evidence="1">
        <text>L-aspartate + NH4(+) + ATP = L-asparagine + AMP + diphosphate + H(+)</text>
        <dbReference type="Rhea" id="RHEA:11372"/>
        <dbReference type="ChEBI" id="CHEBI:15378"/>
        <dbReference type="ChEBI" id="CHEBI:28938"/>
        <dbReference type="ChEBI" id="CHEBI:29991"/>
        <dbReference type="ChEBI" id="CHEBI:30616"/>
        <dbReference type="ChEBI" id="CHEBI:33019"/>
        <dbReference type="ChEBI" id="CHEBI:58048"/>
        <dbReference type="ChEBI" id="CHEBI:456215"/>
        <dbReference type="EC" id="6.3.1.1"/>
    </reaction>
</comment>
<comment type="pathway">
    <text evidence="1">Amino-acid biosynthesis; L-asparagine biosynthesis; L-asparagine from L-aspartate (ammonia route): step 1/1.</text>
</comment>
<comment type="subcellular location">
    <subcellularLocation>
        <location evidence="1">Cytoplasm</location>
    </subcellularLocation>
</comment>
<comment type="similarity">
    <text evidence="1">Belongs to the class-II aminoacyl-tRNA synthetase family. AsnA subfamily.</text>
</comment>
<accession>B4TAY6</accession>
<proteinExistence type="inferred from homology"/>
<reference key="1">
    <citation type="journal article" date="2011" name="J. Bacteriol.">
        <title>Comparative genomics of 28 Salmonella enterica isolates: evidence for CRISPR-mediated adaptive sublineage evolution.</title>
        <authorList>
            <person name="Fricke W.F."/>
            <person name="Mammel M.K."/>
            <person name="McDermott P.F."/>
            <person name="Tartera C."/>
            <person name="White D.G."/>
            <person name="Leclerc J.E."/>
            <person name="Ravel J."/>
            <person name="Cebula T.A."/>
        </authorList>
    </citation>
    <scope>NUCLEOTIDE SEQUENCE [LARGE SCALE GENOMIC DNA]</scope>
    <source>
        <strain>SL476</strain>
    </source>
</reference>
<evidence type="ECO:0000255" key="1">
    <source>
        <dbReference type="HAMAP-Rule" id="MF_00555"/>
    </source>
</evidence>
<protein>
    <recommendedName>
        <fullName evidence="1">Aspartate--ammonia ligase</fullName>
        <ecNumber evidence="1">6.3.1.1</ecNumber>
    </recommendedName>
    <alternativeName>
        <fullName evidence="1">Asparagine synthetase A</fullName>
    </alternativeName>
</protein>
<feature type="chain" id="PRO_1000129126" description="Aspartate--ammonia ligase">
    <location>
        <begin position="1"/>
        <end position="330"/>
    </location>
</feature>
<sequence length="330" mass="36838">MKTAYIAKQRQISFVKSHFSRQLEERLGLIEVQAPILSRVGDGTQDNLSGCEKAVQVKVKALPDAQFEVVHSLAKWKRQTLGQHDFSAGEGLYTHMKALRPDEDRLSPLHSVYVDQWDWERVMGDGERQFSTLKSTVEAIWAGIKATEAEVHKQFGLAPFLPEQIQFVHSQELLSRYPDLDAKGRERAIAKELGAVFLVGIGGKLSDGHRHDVRAPDYDDWSSASELGYAGLNGDILVWNPVLEDAFELSSMGIRVDADTLMRQLALTGDEDRLQLEWHQALLRGEMPQTIGGGIGQSRLTMLLLQLPHIGQVQCGVWPAQVRESIPAIL</sequence>
<name>ASNA_SALHS</name>
<dbReference type="EC" id="6.3.1.1" evidence="1"/>
<dbReference type="EMBL" id="CP001120">
    <property type="protein sequence ID" value="ACF68333.1"/>
    <property type="molecule type" value="Genomic_DNA"/>
</dbReference>
<dbReference type="RefSeq" id="WP_000845123.1">
    <property type="nucleotide sequence ID" value="NC_011083.1"/>
</dbReference>
<dbReference type="SMR" id="B4TAY6"/>
<dbReference type="KEGG" id="seh:SeHA_C4210"/>
<dbReference type="HOGENOM" id="CLU_071543_0_0_6"/>
<dbReference type="UniPathway" id="UPA00134">
    <property type="reaction ID" value="UER00194"/>
</dbReference>
<dbReference type="Proteomes" id="UP000001866">
    <property type="component" value="Chromosome"/>
</dbReference>
<dbReference type="GO" id="GO:0005829">
    <property type="term" value="C:cytosol"/>
    <property type="evidence" value="ECO:0007669"/>
    <property type="project" value="TreeGrafter"/>
</dbReference>
<dbReference type="GO" id="GO:0004071">
    <property type="term" value="F:aspartate-ammonia ligase activity"/>
    <property type="evidence" value="ECO:0007669"/>
    <property type="project" value="UniProtKB-UniRule"/>
</dbReference>
<dbReference type="GO" id="GO:0005524">
    <property type="term" value="F:ATP binding"/>
    <property type="evidence" value="ECO:0007669"/>
    <property type="project" value="UniProtKB-UniRule"/>
</dbReference>
<dbReference type="GO" id="GO:0070981">
    <property type="term" value="P:L-asparagine biosynthetic process"/>
    <property type="evidence" value="ECO:0007669"/>
    <property type="project" value="UniProtKB-UniRule"/>
</dbReference>
<dbReference type="CDD" id="cd00645">
    <property type="entry name" value="AsnA"/>
    <property type="match status" value="1"/>
</dbReference>
<dbReference type="FunFam" id="3.30.930.10:FF:000025">
    <property type="entry name" value="Aspartate--ammonia ligase"/>
    <property type="match status" value="1"/>
</dbReference>
<dbReference type="Gene3D" id="3.30.930.10">
    <property type="entry name" value="Bira Bifunctional Protein, Domain 2"/>
    <property type="match status" value="1"/>
</dbReference>
<dbReference type="HAMAP" id="MF_00555">
    <property type="entry name" value="AsnA"/>
    <property type="match status" value="1"/>
</dbReference>
<dbReference type="InterPro" id="IPR006195">
    <property type="entry name" value="aa-tRNA-synth_II"/>
</dbReference>
<dbReference type="InterPro" id="IPR045864">
    <property type="entry name" value="aa-tRNA-synth_II/BPL/LPL"/>
</dbReference>
<dbReference type="InterPro" id="IPR004618">
    <property type="entry name" value="AsnA"/>
</dbReference>
<dbReference type="NCBIfam" id="TIGR00669">
    <property type="entry name" value="asnA"/>
    <property type="match status" value="1"/>
</dbReference>
<dbReference type="PANTHER" id="PTHR30073">
    <property type="entry name" value="ASPARTATE--AMMONIA LIGASE"/>
    <property type="match status" value="1"/>
</dbReference>
<dbReference type="PANTHER" id="PTHR30073:SF5">
    <property type="entry name" value="ASPARTATE--AMMONIA LIGASE"/>
    <property type="match status" value="1"/>
</dbReference>
<dbReference type="Pfam" id="PF03590">
    <property type="entry name" value="AsnA"/>
    <property type="match status" value="1"/>
</dbReference>
<dbReference type="PIRSF" id="PIRSF001555">
    <property type="entry name" value="Asp_ammon_ligase"/>
    <property type="match status" value="1"/>
</dbReference>
<dbReference type="SUPFAM" id="SSF55681">
    <property type="entry name" value="Class II aaRS and biotin synthetases"/>
    <property type="match status" value="1"/>
</dbReference>
<dbReference type="PROSITE" id="PS50862">
    <property type="entry name" value="AA_TRNA_LIGASE_II"/>
    <property type="match status" value="1"/>
</dbReference>
<keyword id="KW-0028">Amino-acid biosynthesis</keyword>
<keyword id="KW-0061">Asparagine biosynthesis</keyword>
<keyword id="KW-0067">ATP-binding</keyword>
<keyword id="KW-0963">Cytoplasm</keyword>
<keyword id="KW-0436">Ligase</keyword>
<keyword id="KW-0547">Nucleotide-binding</keyword>